<accession>Q59PD6</accession>
<accession>A0A1D8PFF2</accession>
<sequence length="696" mass="82221">MSTGSSPFVDHKSNNSTISINNNSSILNESSISKAYVSKLEFQLDTIKTENRILQQEKDQITSDYRKIIDEKNQELENLKLNFKYVYDEKNQLESKLTNQEQVSTNNINQLSDEIQTYKRENLKLTKDYNSLLDKFNKLNRKNQQIMHDLNKEIEVNDKLHQELKIKEKTNQELQKASDTAINELEQYSKILDKKNGSDNLLYKNLTTKSNNLQNINHQLQNKIDQLLQNKTSNELLKQQNQSLLHKLQNLENIESKYLQLEIEKLQLETKYNDLFKALDTAIASSNEYKDNENTDDTIHTSKVKSFIEYCNNLQAKNLTLQEKYDSKIIQVKELTKELEDHAREIETDFLPTITDLESKLKVYADQNTKLERTKSLREKEITFLRNSLKQMEQIHANQQHKQQEQEKEENTENKSISQYMTNLEKLVDEYKTKIDELEKKNLEYNKSSIITNEKTPSNKRQRLESNYTFKTQAIELEKENIEISSKLKQAESTIEQLKFKISELDKVETRKEQYRILQLKNNLISQDQFIKQTTLIALRKENEELINKYIKNLPIEEQIPKGVFQRQEDDKQRLQAQIDHLTKRSTRLREVFTKKSKDIITVIAKYFGFIIEFLPNPINPTDLFSRIKLRSRYIPSEEDCYLIIDVENRGLKAHGNFQFKQICEELAQYWVNENNQFPCLLSAVNLKLYEIYASK</sequence>
<organism>
    <name type="scientific">Candida albicans (strain SC5314 / ATCC MYA-2876)</name>
    <name type="common">Yeast</name>
    <dbReference type="NCBI Taxonomy" id="237561"/>
    <lineage>
        <taxon>Eukaryota</taxon>
        <taxon>Fungi</taxon>
        <taxon>Dikarya</taxon>
        <taxon>Ascomycota</taxon>
        <taxon>Saccharomycotina</taxon>
        <taxon>Pichiomycetes</taxon>
        <taxon>Debaryomycetaceae</taxon>
        <taxon>Candida/Lodderomyces clade</taxon>
        <taxon>Candida</taxon>
    </lineage>
</organism>
<name>MAD1_CANAL</name>
<gene>
    <name evidence="4" type="primary">MAD1</name>
    <name type="ordered locus">CAALFM_C112660WA</name>
    <name evidence="4" type="ORF">CaO19.13714</name>
    <name evidence="4" type="ORF">CaO19.6357</name>
</gene>
<evidence type="ECO:0000250" key="1">
    <source>
        <dbReference type="UniProtKB" id="P40957"/>
    </source>
</evidence>
<evidence type="ECO:0000256" key="2">
    <source>
        <dbReference type="SAM" id="MobiDB-lite"/>
    </source>
</evidence>
<evidence type="ECO:0000305" key="3"/>
<evidence type="ECO:0000312" key="4">
    <source>
        <dbReference type="CGD" id="CAL0000199073"/>
    </source>
</evidence>
<keyword id="KW-0131">Cell cycle</keyword>
<keyword id="KW-0132">Cell division</keyword>
<keyword id="KW-0498">Mitosis</keyword>
<keyword id="KW-0539">Nucleus</keyword>
<keyword id="KW-1185">Reference proteome</keyword>
<comment type="function">
    <text evidence="1">Central component of the spindle assembly checkpoint which is a feedback control that prevents cells with incompletely assembled spindles from leaving mitosis.</text>
</comment>
<comment type="subunit">
    <text evidence="1">Component of the mitotic checkpoint complex (MCC).</text>
</comment>
<comment type="subcellular location">
    <subcellularLocation>
        <location evidence="3">Nucleus</location>
    </subcellularLocation>
</comment>
<comment type="similarity">
    <text evidence="3">Belongs to the MAD1 family.</text>
</comment>
<dbReference type="EMBL" id="CP017623">
    <property type="protein sequence ID" value="AOW26881.1"/>
    <property type="molecule type" value="Genomic_DNA"/>
</dbReference>
<dbReference type="RefSeq" id="XP_711575.2">
    <property type="nucleotide sequence ID" value="XM_706483.2"/>
</dbReference>
<dbReference type="SMR" id="Q59PD6"/>
<dbReference type="FunCoup" id="Q59PD6">
    <property type="interactions" value="327"/>
</dbReference>
<dbReference type="STRING" id="237561.Q59PD6"/>
<dbReference type="EnsemblFungi" id="C1_12660W_A-T">
    <property type="protein sequence ID" value="C1_12660W_A-T-p1"/>
    <property type="gene ID" value="C1_12660W_A"/>
</dbReference>
<dbReference type="GeneID" id="3646835"/>
<dbReference type="KEGG" id="cal:CAALFM_C112660WA"/>
<dbReference type="CGD" id="CAL0000199073">
    <property type="gene designation" value="orf19.13714"/>
</dbReference>
<dbReference type="VEuPathDB" id="FungiDB:C1_12660W_A"/>
<dbReference type="eggNOG" id="KOG4593">
    <property type="taxonomic scope" value="Eukaryota"/>
</dbReference>
<dbReference type="HOGENOM" id="CLU_418026_0_0_1"/>
<dbReference type="InParanoid" id="Q59PD6"/>
<dbReference type="OMA" id="FGFIIEF"/>
<dbReference type="OrthoDB" id="331602at2759"/>
<dbReference type="PRO" id="PR:Q59PD6"/>
<dbReference type="Proteomes" id="UP000000559">
    <property type="component" value="Chromosome 1"/>
</dbReference>
<dbReference type="GO" id="GO:0000776">
    <property type="term" value="C:kinetochore"/>
    <property type="evidence" value="ECO:0000318"/>
    <property type="project" value="GO_Central"/>
</dbReference>
<dbReference type="GO" id="GO:0072686">
    <property type="term" value="C:mitotic spindle"/>
    <property type="evidence" value="ECO:0000318"/>
    <property type="project" value="GO_Central"/>
</dbReference>
<dbReference type="GO" id="GO:0005635">
    <property type="term" value="C:nuclear envelope"/>
    <property type="evidence" value="ECO:0000318"/>
    <property type="project" value="GO_Central"/>
</dbReference>
<dbReference type="GO" id="GO:0051315">
    <property type="term" value="P:attachment of mitotic spindle microtubules to kinetochore"/>
    <property type="evidence" value="ECO:0000318"/>
    <property type="project" value="GO_Central"/>
</dbReference>
<dbReference type="GO" id="GO:0051301">
    <property type="term" value="P:cell division"/>
    <property type="evidence" value="ECO:0007669"/>
    <property type="project" value="UniProtKB-KW"/>
</dbReference>
<dbReference type="GO" id="GO:0007094">
    <property type="term" value="P:mitotic spindle assembly checkpoint signaling"/>
    <property type="evidence" value="ECO:0000318"/>
    <property type="project" value="GO_Central"/>
</dbReference>
<dbReference type="Gene3D" id="3.30.457.60">
    <property type="match status" value="1"/>
</dbReference>
<dbReference type="InterPro" id="IPR008672">
    <property type="entry name" value="Mad1"/>
</dbReference>
<dbReference type="PANTHER" id="PTHR23168:SF0">
    <property type="entry name" value="MITOTIC SPINDLE ASSEMBLY CHECKPOINT PROTEIN MAD1"/>
    <property type="match status" value="1"/>
</dbReference>
<dbReference type="PANTHER" id="PTHR23168">
    <property type="entry name" value="MITOTIC SPINDLE ASSEMBLY CHECKPOINT PROTEIN MAD1 MITOTIC ARREST DEFICIENT-LIKE PROTEIN 1"/>
    <property type="match status" value="1"/>
</dbReference>
<dbReference type="Pfam" id="PF05557">
    <property type="entry name" value="MAD"/>
    <property type="match status" value="1"/>
</dbReference>
<proteinExistence type="inferred from homology"/>
<protein>
    <recommendedName>
        <fullName evidence="3">Spindle assembly checkpoint component MAD1</fullName>
    </recommendedName>
</protein>
<reference key="1">
    <citation type="journal article" date="2004" name="Proc. Natl. Acad. Sci. U.S.A.">
        <title>The diploid genome sequence of Candida albicans.</title>
        <authorList>
            <person name="Jones T."/>
            <person name="Federspiel N.A."/>
            <person name="Chibana H."/>
            <person name="Dungan J."/>
            <person name="Kalman S."/>
            <person name="Magee B.B."/>
            <person name="Newport G."/>
            <person name="Thorstenson Y.R."/>
            <person name="Agabian N."/>
            <person name="Magee P.T."/>
            <person name="Davis R.W."/>
            <person name="Scherer S."/>
        </authorList>
    </citation>
    <scope>NUCLEOTIDE SEQUENCE [LARGE SCALE GENOMIC DNA]</scope>
    <source>
        <strain>SC5314 / ATCC MYA-2876</strain>
    </source>
</reference>
<reference key="2">
    <citation type="journal article" date="2007" name="Genome Biol.">
        <title>Assembly of the Candida albicans genome into sixteen supercontigs aligned on the eight chromosomes.</title>
        <authorList>
            <person name="van het Hoog M."/>
            <person name="Rast T.J."/>
            <person name="Martchenko M."/>
            <person name="Grindle S."/>
            <person name="Dignard D."/>
            <person name="Hogues H."/>
            <person name="Cuomo C."/>
            <person name="Berriman M."/>
            <person name="Scherer S."/>
            <person name="Magee B.B."/>
            <person name="Whiteway M."/>
            <person name="Chibana H."/>
            <person name="Nantel A."/>
            <person name="Magee P.T."/>
        </authorList>
    </citation>
    <scope>GENOME REANNOTATION</scope>
    <source>
        <strain>SC5314 / ATCC MYA-2876</strain>
    </source>
</reference>
<reference key="3">
    <citation type="journal article" date="2013" name="Genome Biol.">
        <title>Assembly of a phased diploid Candida albicans genome facilitates allele-specific measurements and provides a simple model for repeat and indel structure.</title>
        <authorList>
            <person name="Muzzey D."/>
            <person name="Schwartz K."/>
            <person name="Weissman J.S."/>
            <person name="Sherlock G."/>
        </authorList>
    </citation>
    <scope>NUCLEOTIDE SEQUENCE [LARGE SCALE GENOMIC DNA]</scope>
    <scope>GENOME REANNOTATION</scope>
    <source>
        <strain>SC5314 / ATCC MYA-2876</strain>
    </source>
</reference>
<feature type="chain" id="PRO_0000430605" description="Spindle assembly checkpoint component MAD1">
    <location>
        <begin position="1"/>
        <end position="696"/>
    </location>
</feature>
<feature type="region of interest" description="Disordered" evidence="2">
    <location>
        <begin position="1"/>
        <end position="22"/>
    </location>
</feature>
<feature type="region of interest" description="Disordered" evidence="2">
    <location>
        <begin position="394"/>
        <end position="415"/>
    </location>
</feature>
<feature type="compositionally biased region" description="Basic and acidic residues" evidence="2">
    <location>
        <begin position="402"/>
        <end position="413"/>
    </location>
</feature>